<feature type="chain" id="PRO_0000115187" description="DNA mismatch repair protein MSH2">
    <location>
        <begin position="1"/>
        <end position="937"/>
    </location>
</feature>
<feature type="region of interest" description="Disordered" evidence="2">
    <location>
        <begin position="861"/>
        <end position="888"/>
    </location>
</feature>
<feature type="compositionally biased region" description="Polar residues" evidence="2">
    <location>
        <begin position="861"/>
        <end position="870"/>
    </location>
</feature>
<feature type="compositionally biased region" description="Basic and acidic residues" evidence="2">
    <location>
        <begin position="871"/>
        <end position="888"/>
    </location>
</feature>
<feature type="binding site" evidence="1">
    <location>
        <begin position="666"/>
        <end position="673"/>
    </location>
    <ligand>
        <name>ATP</name>
        <dbReference type="ChEBI" id="CHEBI:30616"/>
    </ligand>
</feature>
<feature type="sequence variant" description="In strain: cv. Landsberg erecta.">
    <original>T</original>
    <variation>A</variation>
    <location>
        <position position="404"/>
    </location>
</feature>
<feature type="sequence variant" description="In strain: cv. Landsberg erecta.">
    <original>S</original>
    <variation>N</variation>
    <location>
        <position position="468"/>
    </location>
</feature>
<feature type="sequence variant" description="In strain: cv. Landsberg erecta.">
    <original>S</original>
    <variation>L</variation>
    <location>
        <position position="624"/>
    </location>
</feature>
<feature type="sequence variant" description="In strain: cv. Landsberg erecta.">
    <original>S</original>
    <variation>T</variation>
    <location>
        <position position="737"/>
    </location>
</feature>
<feature type="sequence variant" description="In strain: cv. Landsberg erecta.">
    <original>I</original>
    <variation>M</variation>
    <location>
        <position position="902"/>
    </location>
</feature>
<feature type="sequence conflict" description="In Ref. 6; AAD00647." evidence="11" ref="6">
    <original>F</original>
    <variation>Y</variation>
    <location>
        <position position="781"/>
    </location>
</feature>
<evidence type="ECO:0000255" key="1"/>
<evidence type="ECO:0000256" key="2">
    <source>
        <dbReference type="SAM" id="MobiDB-lite"/>
    </source>
</evidence>
<evidence type="ECO:0000269" key="3">
    <source>
    </source>
</evidence>
<evidence type="ECO:0000269" key="4">
    <source>
    </source>
</evidence>
<evidence type="ECO:0000269" key="5">
    <source>
    </source>
</evidence>
<evidence type="ECO:0000269" key="6">
    <source>
    </source>
</evidence>
<evidence type="ECO:0000269" key="7">
    <source>
    </source>
</evidence>
<evidence type="ECO:0000269" key="8">
    <source>
    </source>
</evidence>
<evidence type="ECO:0000269" key="9">
    <source>
    </source>
</evidence>
<evidence type="ECO:0000269" key="10">
    <source>
    </source>
</evidence>
<evidence type="ECO:0000305" key="11"/>
<protein>
    <recommendedName>
        <fullName>DNA mismatch repair protein MSH2</fullName>
        <shortName>AtMSH2</shortName>
    </recommendedName>
    <alternativeName>
        <fullName>MutS protein homolog 2</fullName>
    </alternativeName>
</protein>
<dbReference type="EMBL" id="AF026549">
    <property type="protein sequence ID" value="AAB81282.1"/>
    <property type="molecule type" value="mRNA"/>
</dbReference>
<dbReference type="EMBL" id="AF109243">
    <property type="protein sequence ID" value="AAD04176.1"/>
    <property type="molecule type" value="Genomic_DNA"/>
</dbReference>
<dbReference type="EMBL" id="AF002706">
    <property type="protein sequence ID" value="AAB82649.1"/>
    <property type="molecule type" value="mRNA"/>
</dbReference>
<dbReference type="EMBL" id="AF003005">
    <property type="protein sequence ID" value="AAB82650.1"/>
    <property type="molecule type" value="Genomic_DNA"/>
</dbReference>
<dbReference type="EMBL" id="AB026658">
    <property type="protein sequence ID" value="BAB01119.1"/>
    <property type="molecule type" value="Genomic_DNA"/>
</dbReference>
<dbReference type="EMBL" id="AP001303">
    <property type="protein sequence ID" value="BAB01119.1"/>
    <property type="status" value="JOINED"/>
    <property type="molecule type" value="Genomic_DNA"/>
</dbReference>
<dbReference type="EMBL" id="CP002686">
    <property type="protein sequence ID" value="AEE76112.1"/>
    <property type="molecule type" value="Genomic_DNA"/>
</dbReference>
<dbReference type="EMBL" id="U87911">
    <property type="protein sequence ID" value="AAD00647.1"/>
    <property type="molecule type" value="mRNA"/>
</dbReference>
<dbReference type="RefSeq" id="NP_566804.3">
    <property type="nucleotide sequence ID" value="NM_113607.4"/>
</dbReference>
<dbReference type="SMR" id="O24617"/>
<dbReference type="BioGRID" id="6716">
    <property type="interactions" value="6"/>
</dbReference>
<dbReference type="FunCoup" id="O24617">
    <property type="interactions" value="3506"/>
</dbReference>
<dbReference type="STRING" id="3702.O24617"/>
<dbReference type="iPTMnet" id="O24617"/>
<dbReference type="PaxDb" id="3702-AT3G18524.1"/>
<dbReference type="ProteomicsDB" id="239001"/>
<dbReference type="EnsemblPlants" id="AT3G18524.1">
    <property type="protein sequence ID" value="AT3G18524.1"/>
    <property type="gene ID" value="AT3G18524"/>
</dbReference>
<dbReference type="GeneID" id="821383"/>
<dbReference type="Gramene" id="AT3G18524.1">
    <property type="protein sequence ID" value="AT3G18524.1"/>
    <property type="gene ID" value="AT3G18524"/>
</dbReference>
<dbReference type="KEGG" id="ath:AT3G18524"/>
<dbReference type="Araport" id="AT3G18524"/>
<dbReference type="TAIR" id="AT3G18524">
    <property type="gene designation" value="MSH2"/>
</dbReference>
<dbReference type="eggNOG" id="KOG0219">
    <property type="taxonomic scope" value="Eukaryota"/>
</dbReference>
<dbReference type="HOGENOM" id="CLU_002472_10_0_1"/>
<dbReference type="InParanoid" id="O24617"/>
<dbReference type="OMA" id="LVRFPQK"/>
<dbReference type="PhylomeDB" id="O24617"/>
<dbReference type="PRO" id="PR:O24617"/>
<dbReference type="Proteomes" id="UP000006548">
    <property type="component" value="Chromosome 3"/>
</dbReference>
<dbReference type="ExpressionAtlas" id="O24617">
    <property type="expression patterns" value="baseline and differential"/>
</dbReference>
<dbReference type="GO" id="GO:0005634">
    <property type="term" value="C:nucleus"/>
    <property type="evidence" value="ECO:0007669"/>
    <property type="project" value="UniProtKB-SubCell"/>
</dbReference>
<dbReference type="GO" id="GO:0005886">
    <property type="term" value="C:plasma membrane"/>
    <property type="evidence" value="ECO:0007005"/>
    <property type="project" value="TAIR"/>
</dbReference>
<dbReference type="GO" id="GO:0005524">
    <property type="term" value="F:ATP binding"/>
    <property type="evidence" value="ECO:0007669"/>
    <property type="project" value="UniProtKB-KW"/>
</dbReference>
<dbReference type="GO" id="GO:0140664">
    <property type="term" value="F:ATP-dependent DNA damage sensor activity"/>
    <property type="evidence" value="ECO:0007669"/>
    <property type="project" value="InterPro"/>
</dbReference>
<dbReference type="GO" id="GO:0003684">
    <property type="term" value="F:damaged DNA binding"/>
    <property type="evidence" value="ECO:0000314"/>
    <property type="project" value="TAIR"/>
</dbReference>
<dbReference type="GO" id="GO:0030983">
    <property type="term" value="F:mismatched DNA binding"/>
    <property type="evidence" value="ECO:0000314"/>
    <property type="project" value="TAIR"/>
</dbReference>
<dbReference type="GO" id="GO:0006298">
    <property type="term" value="P:mismatch repair"/>
    <property type="evidence" value="ECO:0000315"/>
    <property type="project" value="TAIR"/>
</dbReference>
<dbReference type="GO" id="GO:0045128">
    <property type="term" value="P:negative regulation of reciprocal meiotic recombination"/>
    <property type="evidence" value="ECO:0000315"/>
    <property type="project" value="TAIR"/>
</dbReference>
<dbReference type="GO" id="GO:0006290">
    <property type="term" value="P:pyrimidine dimer repair"/>
    <property type="evidence" value="ECO:0000315"/>
    <property type="project" value="TAIR"/>
</dbReference>
<dbReference type="CDD" id="cd03285">
    <property type="entry name" value="ABC_MSH2_euk"/>
    <property type="match status" value="1"/>
</dbReference>
<dbReference type="FunFam" id="1.10.1420.10:FF:000003">
    <property type="entry name" value="DNA mismatch repair protein"/>
    <property type="match status" value="1"/>
</dbReference>
<dbReference type="FunFam" id="3.30.420.110:FF:000002">
    <property type="entry name" value="DNA mismatch repair protein"/>
    <property type="match status" value="1"/>
</dbReference>
<dbReference type="FunFam" id="3.40.1170.10:FF:000003">
    <property type="entry name" value="DNA mismatch repair protein"/>
    <property type="match status" value="1"/>
</dbReference>
<dbReference type="FunFam" id="1.10.1420.10:FF:000021">
    <property type="entry name" value="DNA mismatch repair protein MSH2"/>
    <property type="match status" value="1"/>
</dbReference>
<dbReference type="FunFam" id="3.40.50.300:FF:000925">
    <property type="entry name" value="DNA mismatch repair protein MSH2"/>
    <property type="match status" value="1"/>
</dbReference>
<dbReference type="Gene3D" id="1.10.1420.10">
    <property type="match status" value="2"/>
</dbReference>
<dbReference type="Gene3D" id="3.40.1170.10">
    <property type="entry name" value="DNA repair protein MutS, domain I"/>
    <property type="match status" value="1"/>
</dbReference>
<dbReference type="Gene3D" id="3.30.420.110">
    <property type="entry name" value="MutS, connector domain"/>
    <property type="match status" value="1"/>
</dbReference>
<dbReference type="Gene3D" id="3.40.50.300">
    <property type="entry name" value="P-loop containing nucleotide triphosphate hydrolases"/>
    <property type="match status" value="1"/>
</dbReference>
<dbReference type="InterPro" id="IPR011184">
    <property type="entry name" value="DNA_mismatch_repair_Msh2"/>
</dbReference>
<dbReference type="InterPro" id="IPR007695">
    <property type="entry name" value="DNA_mismatch_repair_MutS-lik_N"/>
</dbReference>
<dbReference type="InterPro" id="IPR000432">
    <property type="entry name" value="DNA_mismatch_repair_MutS_C"/>
</dbReference>
<dbReference type="InterPro" id="IPR007861">
    <property type="entry name" value="DNA_mismatch_repair_MutS_clamp"/>
</dbReference>
<dbReference type="InterPro" id="IPR007696">
    <property type="entry name" value="DNA_mismatch_repair_MutS_core"/>
</dbReference>
<dbReference type="InterPro" id="IPR016151">
    <property type="entry name" value="DNA_mismatch_repair_MutS_N"/>
</dbReference>
<dbReference type="InterPro" id="IPR036187">
    <property type="entry name" value="DNA_mismatch_repair_MutS_sf"/>
</dbReference>
<dbReference type="InterPro" id="IPR007860">
    <property type="entry name" value="DNA_mmatch_repair_MutS_con_dom"/>
</dbReference>
<dbReference type="InterPro" id="IPR032642">
    <property type="entry name" value="Msh2_ATP-bd"/>
</dbReference>
<dbReference type="InterPro" id="IPR045076">
    <property type="entry name" value="MutS"/>
</dbReference>
<dbReference type="InterPro" id="IPR036678">
    <property type="entry name" value="MutS_con_dom_sf"/>
</dbReference>
<dbReference type="InterPro" id="IPR027417">
    <property type="entry name" value="P-loop_NTPase"/>
</dbReference>
<dbReference type="NCBIfam" id="NF003810">
    <property type="entry name" value="PRK05399.1"/>
    <property type="match status" value="1"/>
</dbReference>
<dbReference type="PANTHER" id="PTHR11361:SF35">
    <property type="entry name" value="DNA MISMATCH REPAIR PROTEIN MSH2"/>
    <property type="match status" value="1"/>
</dbReference>
<dbReference type="PANTHER" id="PTHR11361">
    <property type="entry name" value="DNA MISMATCH REPAIR PROTEIN MUTS FAMILY MEMBER"/>
    <property type="match status" value="1"/>
</dbReference>
<dbReference type="Pfam" id="PF01624">
    <property type="entry name" value="MutS_I"/>
    <property type="match status" value="1"/>
</dbReference>
<dbReference type="Pfam" id="PF05188">
    <property type="entry name" value="MutS_II"/>
    <property type="match status" value="1"/>
</dbReference>
<dbReference type="Pfam" id="PF05192">
    <property type="entry name" value="MutS_III"/>
    <property type="match status" value="1"/>
</dbReference>
<dbReference type="Pfam" id="PF05190">
    <property type="entry name" value="MutS_IV"/>
    <property type="match status" value="1"/>
</dbReference>
<dbReference type="Pfam" id="PF00488">
    <property type="entry name" value="MutS_V"/>
    <property type="match status" value="1"/>
</dbReference>
<dbReference type="PIRSF" id="PIRSF005813">
    <property type="entry name" value="MSH2"/>
    <property type="match status" value="1"/>
</dbReference>
<dbReference type="SMART" id="SM00534">
    <property type="entry name" value="MUTSac"/>
    <property type="match status" value="1"/>
</dbReference>
<dbReference type="SMART" id="SM00533">
    <property type="entry name" value="MUTSd"/>
    <property type="match status" value="1"/>
</dbReference>
<dbReference type="SUPFAM" id="SSF48334">
    <property type="entry name" value="DNA repair protein MutS, domain III"/>
    <property type="match status" value="1"/>
</dbReference>
<dbReference type="SUPFAM" id="SSF52540">
    <property type="entry name" value="P-loop containing nucleoside triphosphate hydrolases"/>
    <property type="match status" value="1"/>
</dbReference>
<dbReference type="PROSITE" id="PS00486">
    <property type="entry name" value="DNA_MISMATCH_REPAIR_2"/>
    <property type="match status" value="1"/>
</dbReference>
<organism>
    <name type="scientific">Arabidopsis thaliana</name>
    <name type="common">Mouse-ear cress</name>
    <dbReference type="NCBI Taxonomy" id="3702"/>
    <lineage>
        <taxon>Eukaryota</taxon>
        <taxon>Viridiplantae</taxon>
        <taxon>Streptophyta</taxon>
        <taxon>Embryophyta</taxon>
        <taxon>Tracheophyta</taxon>
        <taxon>Spermatophyta</taxon>
        <taxon>Magnoliopsida</taxon>
        <taxon>eudicotyledons</taxon>
        <taxon>Gunneridae</taxon>
        <taxon>Pentapetalae</taxon>
        <taxon>rosids</taxon>
        <taxon>malvids</taxon>
        <taxon>Brassicales</taxon>
        <taxon>Brassicaceae</taxon>
        <taxon>Camelineae</taxon>
        <taxon>Arabidopsis</taxon>
    </lineage>
</organism>
<keyword id="KW-0067">ATP-binding</keyword>
<keyword id="KW-0227">DNA damage</keyword>
<keyword id="KW-0234">DNA repair</keyword>
<keyword id="KW-0238">DNA-binding</keyword>
<keyword id="KW-0547">Nucleotide-binding</keyword>
<keyword id="KW-0539">Nucleus</keyword>
<keyword id="KW-1185">Reference proteome</keyword>
<reference key="1">
    <citation type="journal article" date="1997" name="Plant Physiol.">
        <title>DNA mismatch repair in plants. An Arabidopsis thaliana gene that predicts a protein belonging to the MSH2 subfamily of eukaryotic MutS homologs.</title>
        <authorList>
            <person name="Culligan K.M."/>
            <person name="Hays J.B."/>
        </authorList>
    </citation>
    <scope>NUCLEOTIDE SEQUENCE [GENOMIC DNA / MRNA]</scope>
    <source>
        <strain>cv. Columbia</strain>
    </source>
</reference>
<reference key="2">
    <citation type="journal article" date="1999" name="Mol. Gen. Genet.">
        <title>Four mismatch repair paralogues coexist in Arabidopsis thaliana: AtMSH2, AtMSH3, AtMSH6-1 and AtMSH6-2.</title>
        <authorList>
            <person name="Ade J."/>
            <person name="Belzile F."/>
            <person name="Philippe H."/>
            <person name="Doutriaux M.P."/>
        </authorList>
    </citation>
    <scope>NUCLEOTIDE SEQUENCE [GENOMIC DNA]</scope>
    <source>
        <strain>cv. Columbia</strain>
        <strain>cv. Landsberg erecta</strain>
    </source>
</reference>
<reference key="3">
    <citation type="journal article" date="2000" name="DNA Res.">
        <title>Structural analysis of Arabidopsis thaliana chromosome 3. I. Sequence features of the regions of 4,504,864 bp covered by sixty P1 and TAC clones.</title>
        <authorList>
            <person name="Sato S."/>
            <person name="Nakamura Y."/>
            <person name="Kaneko T."/>
            <person name="Katoh T."/>
            <person name="Asamizu E."/>
            <person name="Tabata S."/>
        </authorList>
    </citation>
    <scope>NUCLEOTIDE SEQUENCE [LARGE SCALE GENOMIC DNA]</scope>
    <source>
        <strain>cv. Columbia</strain>
    </source>
</reference>
<reference key="4">
    <citation type="journal article" date="2000" name="DNA Res.">
        <title>Structural analysis of Arabidopsis thaliana chromosome 3. II. Sequence features of the 4,251,695 bp regions covered by 90 P1, TAC and BAC clones.</title>
        <authorList>
            <person name="Kaneko T."/>
            <person name="Katoh T."/>
            <person name="Sato S."/>
            <person name="Nakamura Y."/>
            <person name="Asamizu E."/>
            <person name="Tabata S."/>
        </authorList>
    </citation>
    <scope>NUCLEOTIDE SEQUENCE [LARGE SCALE GENOMIC DNA]</scope>
    <source>
        <strain>cv. Columbia</strain>
    </source>
</reference>
<reference key="5">
    <citation type="journal article" date="2017" name="Plant J.">
        <title>Araport11: a complete reannotation of the Arabidopsis thaliana reference genome.</title>
        <authorList>
            <person name="Cheng C.Y."/>
            <person name="Krishnakumar V."/>
            <person name="Chan A.P."/>
            <person name="Thibaud-Nissen F."/>
            <person name="Schobel S."/>
            <person name="Town C.D."/>
        </authorList>
    </citation>
    <scope>GENOME REANNOTATION</scope>
    <source>
        <strain>cv. Columbia</strain>
    </source>
</reference>
<reference key="6">
    <citation type="submission" date="1997-01" db="EMBL/GenBank/DDBJ databases">
        <authorList>
            <person name="Cerovic G."/>
            <person name="Radman M."/>
        </authorList>
    </citation>
    <scope>NUCLEOTIDE SEQUENCE [MRNA] OF 665-781</scope>
</reference>
<reference key="7">
    <citation type="journal article" date="2000" name="Plant Cell">
        <title>Arabidopsis MutS homologs-AtMSH2, AtMSH3, AtMSH6, and a novel AtMSH7-form three distinct protein heterodimers with different specificities for mismatched DNA.</title>
        <authorList>
            <person name="Culligan K.M."/>
            <person name="Hays J.B."/>
        </authorList>
    </citation>
    <scope>FUNCTION</scope>
    <scope>INTERACTION WITH MSH3; MSH6 AND MSH7</scope>
</reference>
<reference key="8">
    <citation type="journal article" date="2001" name="Genome">
        <title>Functional analysis of the Arabidopsis thaliana mismatch repair gene MSH2.</title>
        <authorList>
            <person name="Ade J."/>
            <person name="Haffani Y."/>
            <person name="Beizile F.J."/>
        </authorList>
    </citation>
    <scope>FUNCTION</scope>
</reference>
<reference key="9">
    <citation type="journal article" date="2003" name="Plant Physiol.">
        <title>Reduction of stability of arabidopsis genomic and transgenic DNA-repeat sequences (microsatellites) by inactivation of AtMSH2 mismatch-repair function.</title>
        <authorList>
            <person name="Leonard J.M."/>
            <person name="Bollmann S.R."/>
            <person name="Hays J.B."/>
        </authorList>
    </citation>
    <scope>FUNCTION</scope>
    <scope>DISRUPTION PHENOTYPE</scope>
</reference>
<reference key="10">
    <citation type="journal article" date="2003" name="Nucleic Acids Res.">
        <title>Dissimilar mispair-recognition spectra of Arabidopsis DNA-mismatch-repair proteins MSH2*MSH6 (MutSalpha) and MSH2*MSH7 (MutSgamma).</title>
        <authorList>
            <person name="Wu S.Y."/>
            <person name="Culligan K."/>
            <person name="Lamers M."/>
            <person name="Hays J."/>
        </authorList>
    </citation>
    <scope>FUNCTION</scope>
    <scope>INTERACTION WITH MSH6 AND MSH7</scope>
</reference>
<reference key="11">
    <citation type="journal article" date="2006" name="EMBO Rep.">
        <title>The role of AtMSH2 in homologous recombination in Arabidopsis thaliana.</title>
        <authorList>
            <person name="Emmanuel E."/>
            <person name="Yehuda E."/>
            <person name="Melamed-Bessudo C."/>
            <person name="Avivi-Ragolsky N."/>
            <person name="Levy A.A."/>
        </authorList>
    </citation>
    <scope>FUNCTION</scope>
</reference>
<reference key="12">
    <citation type="journal article" date="2006" name="Plant J.">
        <title>The impact of sequence divergence and DNA mismatch repair on homeologous recombination in Arabidopsis.</title>
        <authorList>
            <person name="Li L."/>
            <person name="Jean M."/>
            <person name="Belzile F."/>
        </authorList>
    </citation>
    <scope>FUNCTION</scope>
</reference>
<reference key="13">
    <citation type="journal article" date="2007" name="Plant Mol. Biol.">
        <title>Impact of the loss of AtMSH2 on double-strand break-induced recombination between highly diverged homeologous sequences in Arabidopsis thaliana germinal tissues.</title>
        <authorList>
            <person name="Lafleuriel J."/>
            <person name="Degroote F."/>
            <person name="Depeiges A."/>
            <person name="Picard G."/>
        </authorList>
    </citation>
    <scope>FUNCTION</scope>
</reference>
<reference key="14">
    <citation type="journal article" date="2011" name="J. Exp. Bot.">
        <title>Regulation of plant MSH2 and MSH6 genes in the UV-B-induced DNA damage response.</title>
        <authorList>
            <person name="Lario L.D."/>
            <person name="Ramirez-Parra E."/>
            <person name="Gutierrez C."/>
            <person name="Casati P."/>
            <person name="Spampinato C.P."/>
        </authorList>
    </citation>
    <scope>FUNCTION</scope>
    <scope>INDUCTION BY UV-B</scope>
</reference>
<proteinExistence type="evidence at protein level"/>
<name>MSH2_ARATH</name>
<sequence>MEGNFEEQNKLPELKLDAKQAQGFLSFYKTLPNDTRAVRFFDRKDYYTAHGENSVFIAKTYYHTTTALRQLGSGSNALSSVSISRNMFETIARDLLLERNDHTVELYEGSGSNWRLVKTGSPGNIGSFEDVLFANNEMQDTPVVVSIFPSFHDGRCVIGMAYVDLTRRVLGLAEFLDDSRFTNLESSLIALGAKECIFPAESGKSNECKSLYDSLERCAVMITERKKHEFKGRDLDSDLKRLVKGNIEPVRDLVSGFDLATPALGALLSFSELLSNEDNYGNFTIRRYDIGGFMRLDSAAMRALNVMESKTDANKNFSLFGLMNRTCTAGMGKRLLHMWLKQPLVDLNEIKTRLDIVQCFVEEAGLRQDLRQHLKRISDVERLLRSLERRRGGLQHIIKLYQSTIRLPFIKTAMQQYTGEFASLISERYLKKLEALSDQDHLGKFIDLVECSVDLDQLENGEYMISSSYDTKLASLKDQKELLEQQIHELHKKTAIELDLQVDKALKLDKAAQFGHVFRITKKEEPKIRKKLTTQFIVLETRKDGVKFTNTKLKKLGDQYQSVVDDYRSCQKELVDRVVETVTSFSEVFEDLAGLLSEMDVLLSFADLAASCPTPYCRPEITSSDAGDIVLEGSRHPCVEAQDWVNFIPNDCRLMRGKSWFQIVTGPNMGGKSTFIRQVGVIVLMAQVGSFVPCDKASISIRDCIFARVGAGDCQLRGVSTFMQEMLETASILKGASDKSLIIIDELGRGTSTYDGFGLAWAICEHLVQVKRAPTLFATHFHELTALAQANSEVSGNTVGVANFHVSAHIDTESRKLTMLYKVEPGACDQSFGIHVAEFANFPESVVALAREKAAELEDFSPSSMIINNEESGKRKSREDDPDEVSRGAERAHKFLKEFAAIPLDKMELKDSLQRVREMKDELEKDAADCHWLRQFL</sequence>
<accession>O24617</accession>
<accession>Q9SQ60</accession>
<accession>Q9ZR93</accession>
<gene>
    <name type="primary">MSH2</name>
    <name type="ordered locus">At3g18524</name>
    <name type="ORF">MYF24.25</name>
</gene>
<comment type="function">
    <text evidence="3 4 5 6 7 8 9 10">Component of the post-replicative DNA mismatch repair system (MMR). Forms three different heterodimers: MutS alpha (MSH2-MSH6 heterodimer), MutS beta (MSH2-MSH3 heterodimer) and MutS gamma (MSH2-MSH7 heterodimer) which binds to DNA mismatches thereby initiating DNA repair. MutS alpha and MutS beta recognize single base mismatches and trinucleotide insertion-deletion loops (IDL) in the DNA. MutS gamma recognizes specifically the T/G single base mismatch. Plays a role in DNA homologous recombination repair and has a broad range of anti-recombination effects. Can suppress recombination between divergent direct repeats in somatic cells and possesses an anti-recombination meiotic effect. Is involved in a UV-B-induced DNA damage response pathway.</text>
</comment>
<comment type="subunit">
    <text>Heterodimer consisting of MSH2-MSH6 (MutS alpha), MSH2-MSH3 (MutS beta) and MSH2-MSH7 (MutS gamma).</text>
</comment>
<comment type="subcellular location">
    <subcellularLocation>
        <location evidence="11">Nucleus</location>
    </subcellularLocation>
</comment>
<comment type="induction">
    <text evidence="10">By UV-B.</text>
</comment>
<comment type="disruption phenotype">
    <text evidence="5">No visible phenotype under normal growth conditions.</text>
</comment>
<comment type="similarity">
    <text evidence="11">Belongs to the DNA mismatch repair MutS family.</text>
</comment>